<protein>
    <recommendedName>
        <fullName>Delta-conotoxin-like Ac6.3</fullName>
    </recommendedName>
</protein>
<organism>
    <name type="scientific">Conus achatinus</name>
    <name type="common">Little frog cone</name>
    <dbReference type="NCBI Taxonomy" id="369967"/>
    <lineage>
        <taxon>Eukaryota</taxon>
        <taxon>Metazoa</taxon>
        <taxon>Spiralia</taxon>
        <taxon>Lophotrochozoa</taxon>
        <taxon>Mollusca</taxon>
        <taxon>Gastropoda</taxon>
        <taxon>Caenogastropoda</taxon>
        <taxon>Neogastropoda</taxon>
        <taxon>Conoidea</taxon>
        <taxon>Conidae</taxon>
        <taxon>Conus</taxon>
        <taxon>Pionoconus</taxon>
    </lineage>
</organism>
<proteinExistence type="evidence at transcript level"/>
<keyword id="KW-0165">Cleavage on pair of basic residues</keyword>
<keyword id="KW-1015">Disulfide bond</keyword>
<keyword id="KW-0872">Ion channel impairing toxin</keyword>
<keyword id="KW-0960">Knottin</keyword>
<keyword id="KW-0528">Neurotoxin</keyword>
<keyword id="KW-0638">Presynaptic neurotoxin</keyword>
<keyword id="KW-0964">Secreted</keyword>
<keyword id="KW-0732">Signal</keyword>
<keyword id="KW-0800">Toxin</keyword>
<keyword id="KW-0738">Voltage-gated sodium channel impairing toxin</keyword>
<name>O163_CONAH</name>
<evidence type="ECO:0000250" key="1"/>
<evidence type="ECO:0000255" key="2"/>
<evidence type="ECO:0000305" key="3"/>
<dbReference type="ConoServer" id="3705">
    <property type="toxin name" value="Ac6.3 precursor"/>
</dbReference>
<dbReference type="GO" id="GO:0005576">
    <property type="term" value="C:extracellular region"/>
    <property type="evidence" value="ECO:0007669"/>
    <property type="project" value="UniProtKB-SubCell"/>
</dbReference>
<dbReference type="GO" id="GO:0044231">
    <property type="term" value="C:host cell presynaptic membrane"/>
    <property type="evidence" value="ECO:0007669"/>
    <property type="project" value="UniProtKB-KW"/>
</dbReference>
<dbReference type="GO" id="GO:0019871">
    <property type="term" value="F:sodium channel inhibitor activity"/>
    <property type="evidence" value="ECO:0007669"/>
    <property type="project" value="InterPro"/>
</dbReference>
<dbReference type="GO" id="GO:0090729">
    <property type="term" value="F:toxin activity"/>
    <property type="evidence" value="ECO:0007669"/>
    <property type="project" value="UniProtKB-KW"/>
</dbReference>
<dbReference type="InterPro" id="IPR004214">
    <property type="entry name" value="Conotoxin"/>
</dbReference>
<dbReference type="InterPro" id="IPR012322">
    <property type="entry name" value="Conotoxin_d-typ_CS"/>
</dbReference>
<dbReference type="InterPro" id="IPR012321">
    <property type="entry name" value="Conotoxin_omega-typ_CS"/>
</dbReference>
<dbReference type="Pfam" id="PF02950">
    <property type="entry name" value="Conotoxin"/>
    <property type="match status" value="1"/>
</dbReference>
<dbReference type="PROSITE" id="PS60005">
    <property type="entry name" value="DELTA_CONOTOXIN"/>
    <property type="match status" value="1"/>
</dbReference>
<comment type="function">
    <text evidence="1">Delta-conotoxins bind to site 6 of voltage-gated sodium channels (Nav) and inhibit the inactivation process.</text>
</comment>
<comment type="subcellular location">
    <subcellularLocation>
        <location evidence="1">Secreted</location>
    </subcellularLocation>
</comment>
<comment type="tissue specificity">
    <text>Expressed by the venom duct.</text>
</comment>
<comment type="domain">
    <text evidence="1">The presence of a 'disulfide through disulfide knot' structurally defines this protein as a knottin.</text>
</comment>
<comment type="domain">
    <text>The cysteine framework is VI/VII (C-C-CC-C-C).</text>
</comment>
<comment type="similarity">
    <text evidence="3">Belongs to the conotoxin O1 superfamily.</text>
</comment>
<reference key="1">
    <citation type="journal article" date="2008" name="J. Mass Spectrom.">
        <title>Probing peptide libraries from Conus achatinus using mass spectrometry and cDNA sequencing: identification of delta and omega-conotoxins.</title>
        <authorList>
            <person name="Gowd K.H."/>
            <person name="Dewan K.K."/>
            <person name="Iengar P."/>
            <person name="Krishnan K.S."/>
            <person name="Balaram P."/>
        </authorList>
    </citation>
    <scope>NUCLEOTIDE SEQUENCE [MRNA]</scope>
    <source>
        <tissue>Venom duct</tissue>
    </source>
</reference>
<feature type="signal peptide" evidence="2">
    <location>
        <begin position="1"/>
        <end position="22"/>
    </location>
</feature>
<feature type="propeptide" id="PRO_0000366087" evidence="1">
    <location>
        <begin position="23"/>
        <end position="51"/>
    </location>
</feature>
<feature type="peptide" id="PRO_0000366088" description="Delta-conotoxin-like Ac6.3">
    <location>
        <begin position="52"/>
        <end position="81"/>
    </location>
</feature>
<feature type="disulfide bond" evidence="1">
    <location>
        <begin position="54"/>
        <end position="69"/>
    </location>
</feature>
<feature type="disulfide bond" evidence="1">
    <location>
        <begin position="61"/>
        <end position="73"/>
    </location>
</feature>
<feature type="disulfide bond" evidence="1">
    <location>
        <begin position="68"/>
        <end position="78"/>
    </location>
</feature>
<accession>P0C8V7</accession>
<sequence>MKLTCVMIVAVLFLTAWTFVTADDSRNGLENLSPKARHEMKNPEASKSNKRYECYSTGTFCGVNGGLCCSNLCLFFVCLFS</sequence>